<protein>
    <recommendedName>
        <fullName>Regulator of sigma-W protease RasP</fullName>
        <ecNumber>3.4.24.-</ecNumber>
    </recommendedName>
    <alternativeName>
        <fullName>Regulating anti-sigma-W factor activity protease</fullName>
    </alternativeName>
    <alternativeName>
        <fullName>S2P endopeptidase</fullName>
    </alternativeName>
    <alternativeName>
        <fullName>Site-2 protease RseP</fullName>
        <shortName>S2P protease RseP</shortName>
    </alternativeName>
    <alternativeName>
        <fullName>Site-2-type intramembrane protease</fullName>
    </alternativeName>
    <alternativeName>
        <fullName>Zinc metalloprotease RasP</fullName>
    </alternativeName>
</protein>
<evidence type="ECO:0000255" key="1"/>
<evidence type="ECO:0000255" key="2">
    <source>
        <dbReference type="PROSITE-ProRule" id="PRU10095"/>
    </source>
</evidence>
<evidence type="ECO:0000269" key="3">
    <source>
    </source>
</evidence>
<evidence type="ECO:0000269" key="4">
    <source>
    </source>
</evidence>
<evidence type="ECO:0000303" key="5">
    <source>
    </source>
</evidence>
<evidence type="ECO:0000305" key="6"/>
<sequence>MFVNTVIAFIIIFGTLVFFHELGHLLLAQRAGILCREFAIGFGPKIFSFKKNETVYTIRLLPVGGFVRMAGEDPEMIEVKPGYTVGLLFNKEDQVEKVIINQKEKYPDALVIEVETADLEHDMKITGYEQGKEDELSSFTVSETSFFIVDGEEVQIAPYNRQFGSKPVWQRIKAIAAGPIMNFILAYVILVMLGLIQGVPSNEPMLGQLTDNGRAAEAGLKEGDYIQSINGEKMRSWTDIVSAVKENPEKEMDVAVKRDNKTLHISVTPEAVKDENKKTIGRFGSYAPTEKGVLSAVAYGATSTVDVTKAILTNLSKLVTGQFKLDMLSGPVGIYDMTDQVAKTGIVNLFQFAAFLSINLGIVNLLPIPALDGGRLLFLFIEAIRGKPINREKEAFVVFIGVAFLMLLMLVVTWNDIQRLFL</sequence>
<comment type="function">
    <text evidence="3 4">Is responsible for site-2 cleavage of the RsiW anti-sigma factor (PubMed:15130127). This results, after a third proteolytic step catalyzed by the ClpXP protease, in the release of SigW and the transcription activation of the genes under the control of the sigma-W factor (PubMed:16899079). Can also cleave liberated signal peptides of PenP and Mpr, probably within in the cell membrane (PubMed:21810987).</text>
</comment>
<comment type="cofactor">
    <cofactor evidence="6">
        <name>Zn(2+)</name>
        <dbReference type="ChEBI" id="CHEBI:29105"/>
    </cofactor>
</comment>
<comment type="subcellular location">
    <subcellularLocation>
        <location evidence="6">Cell membrane</location>
        <topology evidence="6">Multi-pass membrane protein</topology>
    </subcellularLocation>
</comment>
<comment type="disruption phenotype">
    <text evidence="4">No cleavage of signal peptides.</text>
</comment>
<comment type="miscellaneous">
    <text>Regulated intramembrane proteolysis (RIP) occurs when an extracytoplasmic signal triggers a concerted proteolytic cascade to transmit information and elicit cellular responses. A membrane-spanning regulatory substrate protein is first cut extracytoplasmically (site-1 protease, S1P), then within the membrane itself (site-2 protease, S2P, this enzyme), while cytoplasmic proteases finish degrading the regulatory protein, liberating the effector protein.</text>
</comment>
<comment type="similarity">
    <text evidence="6">Belongs to the peptidase M50B family.</text>
</comment>
<keyword id="KW-1003">Cell membrane</keyword>
<keyword id="KW-0378">Hydrolase</keyword>
<keyword id="KW-0472">Membrane</keyword>
<keyword id="KW-0479">Metal-binding</keyword>
<keyword id="KW-0482">Metalloprotease</keyword>
<keyword id="KW-0645">Protease</keyword>
<keyword id="KW-1185">Reference proteome</keyword>
<keyword id="KW-0812">Transmembrane</keyword>
<keyword id="KW-1133">Transmembrane helix</keyword>
<keyword id="KW-0862">Zinc</keyword>
<organism>
    <name type="scientific">Bacillus subtilis (strain 168)</name>
    <dbReference type="NCBI Taxonomy" id="224308"/>
    <lineage>
        <taxon>Bacteria</taxon>
        <taxon>Bacillati</taxon>
        <taxon>Bacillota</taxon>
        <taxon>Bacilli</taxon>
        <taxon>Bacillales</taxon>
        <taxon>Bacillaceae</taxon>
        <taxon>Bacillus</taxon>
    </lineage>
</organism>
<accession>O31754</accession>
<dbReference type="EC" id="3.4.24.-"/>
<dbReference type="EMBL" id="AL009126">
    <property type="protein sequence ID" value="CAB13529.1"/>
    <property type="molecule type" value="Genomic_DNA"/>
</dbReference>
<dbReference type="PIR" id="C69881">
    <property type="entry name" value="C69881"/>
</dbReference>
<dbReference type="RefSeq" id="NP_389538.1">
    <property type="nucleotide sequence ID" value="NC_000964.3"/>
</dbReference>
<dbReference type="SMR" id="O31754"/>
<dbReference type="FunCoup" id="O31754">
    <property type="interactions" value="551"/>
</dbReference>
<dbReference type="STRING" id="224308.BSU16560"/>
<dbReference type="MEROPS" id="M50.011"/>
<dbReference type="TCDB" id="9.B.149.2.1">
    <property type="family name" value="the m50 peptidase (m50-p) family"/>
</dbReference>
<dbReference type="PaxDb" id="224308-BSU16560"/>
<dbReference type="DNASU" id="939612"/>
<dbReference type="EnsemblBacteria" id="CAB13529">
    <property type="protein sequence ID" value="CAB13529"/>
    <property type="gene ID" value="BSU_16560"/>
</dbReference>
<dbReference type="GeneID" id="939612"/>
<dbReference type="KEGG" id="bsu:BSU16560"/>
<dbReference type="PATRIC" id="fig|224308.43.peg.1751"/>
<dbReference type="eggNOG" id="COG0750">
    <property type="taxonomic scope" value="Bacteria"/>
</dbReference>
<dbReference type="InParanoid" id="O31754"/>
<dbReference type="OrthoDB" id="9782003at2"/>
<dbReference type="PhylomeDB" id="O31754"/>
<dbReference type="BioCyc" id="BSUB:BSU16560-MONOMER"/>
<dbReference type="Proteomes" id="UP000001570">
    <property type="component" value="Chromosome"/>
</dbReference>
<dbReference type="GO" id="GO:0005886">
    <property type="term" value="C:plasma membrane"/>
    <property type="evidence" value="ECO:0007669"/>
    <property type="project" value="UniProtKB-SubCell"/>
</dbReference>
<dbReference type="GO" id="GO:0046872">
    <property type="term" value="F:metal ion binding"/>
    <property type="evidence" value="ECO:0007669"/>
    <property type="project" value="UniProtKB-KW"/>
</dbReference>
<dbReference type="GO" id="GO:0004222">
    <property type="term" value="F:metalloendopeptidase activity"/>
    <property type="evidence" value="ECO:0007669"/>
    <property type="project" value="InterPro"/>
</dbReference>
<dbReference type="GO" id="GO:0006508">
    <property type="term" value="P:proteolysis"/>
    <property type="evidence" value="ECO:0007669"/>
    <property type="project" value="UniProtKB-KW"/>
</dbReference>
<dbReference type="CDD" id="cd23081">
    <property type="entry name" value="cpPDZ_EcRseP-like"/>
    <property type="match status" value="1"/>
</dbReference>
<dbReference type="CDD" id="cd06163">
    <property type="entry name" value="S2P-M50_PDZ_RseP-like"/>
    <property type="match status" value="1"/>
</dbReference>
<dbReference type="Gene3D" id="2.30.42.10">
    <property type="match status" value="1"/>
</dbReference>
<dbReference type="InterPro" id="IPR001478">
    <property type="entry name" value="PDZ"/>
</dbReference>
<dbReference type="InterPro" id="IPR041489">
    <property type="entry name" value="PDZ_6"/>
</dbReference>
<dbReference type="InterPro" id="IPR036034">
    <property type="entry name" value="PDZ_sf"/>
</dbReference>
<dbReference type="InterPro" id="IPR004387">
    <property type="entry name" value="Pept_M50_Zn"/>
</dbReference>
<dbReference type="InterPro" id="IPR008915">
    <property type="entry name" value="Peptidase_M50"/>
</dbReference>
<dbReference type="NCBIfam" id="TIGR00054">
    <property type="entry name" value="RIP metalloprotease RseP"/>
    <property type="match status" value="1"/>
</dbReference>
<dbReference type="PANTHER" id="PTHR42837:SF2">
    <property type="entry name" value="MEMBRANE METALLOPROTEASE ARASP2, CHLOROPLASTIC-RELATED"/>
    <property type="match status" value="1"/>
</dbReference>
<dbReference type="PANTHER" id="PTHR42837">
    <property type="entry name" value="REGULATOR OF SIGMA-E PROTEASE RSEP"/>
    <property type="match status" value="1"/>
</dbReference>
<dbReference type="Pfam" id="PF17820">
    <property type="entry name" value="PDZ_6"/>
    <property type="match status" value="1"/>
</dbReference>
<dbReference type="Pfam" id="PF02163">
    <property type="entry name" value="Peptidase_M50"/>
    <property type="match status" value="1"/>
</dbReference>
<dbReference type="SMART" id="SM00228">
    <property type="entry name" value="PDZ"/>
    <property type="match status" value="1"/>
</dbReference>
<dbReference type="SUPFAM" id="SSF50156">
    <property type="entry name" value="PDZ domain-like"/>
    <property type="match status" value="1"/>
</dbReference>
<dbReference type="PROSITE" id="PS00142">
    <property type="entry name" value="ZINC_PROTEASE"/>
    <property type="match status" value="1"/>
</dbReference>
<reference key="1">
    <citation type="journal article" date="1997" name="Nature">
        <title>The complete genome sequence of the Gram-positive bacterium Bacillus subtilis.</title>
        <authorList>
            <person name="Kunst F."/>
            <person name="Ogasawara N."/>
            <person name="Moszer I."/>
            <person name="Albertini A.M."/>
            <person name="Alloni G."/>
            <person name="Azevedo V."/>
            <person name="Bertero M.G."/>
            <person name="Bessieres P."/>
            <person name="Bolotin A."/>
            <person name="Borchert S."/>
            <person name="Borriss R."/>
            <person name="Boursier L."/>
            <person name="Brans A."/>
            <person name="Braun M."/>
            <person name="Brignell S.C."/>
            <person name="Bron S."/>
            <person name="Brouillet S."/>
            <person name="Bruschi C.V."/>
            <person name="Caldwell B."/>
            <person name="Capuano V."/>
            <person name="Carter N.M."/>
            <person name="Choi S.-K."/>
            <person name="Codani J.-J."/>
            <person name="Connerton I.F."/>
            <person name="Cummings N.J."/>
            <person name="Daniel R.A."/>
            <person name="Denizot F."/>
            <person name="Devine K.M."/>
            <person name="Duesterhoeft A."/>
            <person name="Ehrlich S.D."/>
            <person name="Emmerson P.T."/>
            <person name="Entian K.-D."/>
            <person name="Errington J."/>
            <person name="Fabret C."/>
            <person name="Ferrari E."/>
            <person name="Foulger D."/>
            <person name="Fritz C."/>
            <person name="Fujita M."/>
            <person name="Fujita Y."/>
            <person name="Fuma S."/>
            <person name="Galizzi A."/>
            <person name="Galleron N."/>
            <person name="Ghim S.-Y."/>
            <person name="Glaser P."/>
            <person name="Goffeau A."/>
            <person name="Golightly E.J."/>
            <person name="Grandi G."/>
            <person name="Guiseppi G."/>
            <person name="Guy B.J."/>
            <person name="Haga K."/>
            <person name="Haiech J."/>
            <person name="Harwood C.R."/>
            <person name="Henaut A."/>
            <person name="Hilbert H."/>
            <person name="Holsappel S."/>
            <person name="Hosono S."/>
            <person name="Hullo M.-F."/>
            <person name="Itaya M."/>
            <person name="Jones L.-M."/>
            <person name="Joris B."/>
            <person name="Karamata D."/>
            <person name="Kasahara Y."/>
            <person name="Klaerr-Blanchard M."/>
            <person name="Klein C."/>
            <person name="Kobayashi Y."/>
            <person name="Koetter P."/>
            <person name="Koningstein G."/>
            <person name="Krogh S."/>
            <person name="Kumano M."/>
            <person name="Kurita K."/>
            <person name="Lapidus A."/>
            <person name="Lardinois S."/>
            <person name="Lauber J."/>
            <person name="Lazarevic V."/>
            <person name="Lee S.-M."/>
            <person name="Levine A."/>
            <person name="Liu H."/>
            <person name="Masuda S."/>
            <person name="Mauel C."/>
            <person name="Medigue C."/>
            <person name="Medina N."/>
            <person name="Mellado R.P."/>
            <person name="Mizuno M."/>
            <person name="Moestl D."/>
            <person name="Nakai S."/>
            <person name="Noback M."/>
            <person name="Noone D."/>
            <person name="O'Reilly M."/>
            <person name="Ogawa K."/>
            <person name="Ogiwara A."/>
            <person name="Oudega B."/>
            <person name="Park S.-H."/>
            <person name="Parro V."/>
            <person name="Pohl T.M."/>
            <person name="Portetelle D."/>
            <person name="Porwollik S."/>
            <person name="Prescott A.M."/>
            <person name="Presecan E."/>
            <person name="Pujic P."/>
            <person name="Purnelle B."/>
            <person name="Rapoport G."/>
            <person name="Rey M."/>
            <person name="Reynolds S."/>
            <person name="Rieger M."/>
            <person name="Rivolta C."/>
            <person name="Rocha E."/>
            <person name="Roche B."/>
            <person name="Rose M."/>
            <person name="Sadaie Y."/>
            <person name="Sato T."/>
            <person name="Scanlan E."/>
            <person name="Schleich S."/>
            <person name="Schroeter R."/>
            <person name="Scoffone F."/>
            <person name="Sekiguchi J."/>
            <person name="Sekowska A."/>
            <person name="Seror S.J."/>
            <person name="Serror P."/>
            <person name="Shin B.-S."/>
            <person name="Soldo B."/>
            <person name="Sorokin A."/>
            <person name="Tacconi E."/>
            <person name="Takagi T."/>
            <person name="Takahashi H."/>
            <person name="Takemaru K."/>
            <person name="Takeuchi M."/>
            <person name="Tamakoshi A."/>
            <person name="Tanaka T."/>
            <person name="Terpstra P."/>
            <person name="Tognoni A."/>
            <person name="Tosato V."/>
            <person name="Uchiyama S."/>
            <person name="Vandenbol M."/>
            <person name="Vannier F."/>
            <person name="Vassarotti A."/>
            <person name="Viari A."/>
            <person name="Wambutt R."/>
            <person name="Wedler E."/>
            <person name="Wedler H."/>
            <person name="Weitzenegger T."/>
            <person name="Winters P."/>
            <person name="Wipat A."/>
            <person name="Yamamoto H."/>
            <person name="Yamane K."/>
            <person name="Yasumoto K."/>
            <person name="Yata K."/>
            <person name="Yoshida K."/>
            <person name="Yoshikawa H.-F."/>
            <person name="Zumstein E."/>
            <person name="Yoshikawa H."/>
            <person name="Danchin A."/>
        </authorList>
    </citation>
    <scope>NUCLEOTIDE SEQUENCE [LARGE SCALE GENOMIC DNA]</scope>
    <source>
        <strain>168</strain>
    </source>
</reference>
<reference key="2">
    <citation type="journal article" date="2004" name="Mol. Microbiol.">
        <title>The Bacillus subtilis sigmaW anti-sigma factor RsiW is degraded by intramembrane proteolysis through YluC.</title>
        <authorList>
            <person name="Schoebel S."/>
            <person name="Zellmeier S."/>
            <person name="Schumann W."/>
            <person name="Wiegert T."/>
        </authorList>
    </citation>
    <scope>FUNCTION IN RSIW DEGRADATION</scope>
</reference>
<reference key="3">
    <citation type="journal article" date="2006" name="Mol. Microbiol.">
        <title>Involvement of Clp protease activity in modulating the Bacillus subtilis sigma-W stress response.</title>
        <authorList>
            <person name="Zellmeier S."/>
            <person name="Schumann W."/>
            <person name="Wiegert T."/>
        </authorList>
    </citation>
    <scope>GENE NAME</scope>
</reference>
<reference key="4">
    <citation type="journal article" date="2011" name="Proc. Natl. Acad. Sci. U.S.A.">
        <title>Post-liberation cleavage of signal peptides is catalyzed by the site-2 protease (S2P) in bacteria.</title>
        <authorList>
            <person name="Saito A."/>
            <person name="Hizukuri Y."/>
            <person name="Matsuo E."/>
            <person name="Chiba S."/>
            <person name="Mori H."/>
            <person name="Nishimura O."/>
            <person name="Ito K."/>
            <person name="Akiyama Y."/>
        </authorList>
    </citation>
    <scope>FUNCTION IN CLEAVAGE OF SIGNAL PEPTIDES</scope>
    <scope>DISRUPTION PHENOTYPE</scope>
    <scope>MUTAGENESIS OF GLU-21</scope>
    <source>
        <strain>168 / PY79</strain>
    </source>
</reference>
<proteinExistence type="evidence at protein level"/>
<name>RASP_BACSU</name>
<feature type="chain" id="PRO_0000088429" description="Regulator of sigma-W protease RasP">
    <location>
        <begin position="1"/>
        <end position="422"/>
    </location>
</feature>
<feature type="transmembrane region" description="Helical" evidence="1">
    <location>
        <begin position="6"/>
        <end position="26"/>
    </location>
</feature>
<feature type="transmembrane region" description="Helical" evidence="1">
    <location>
        <begin position="175"/>
        <end position="195"/>
    </location>
</feature>
<feature type="transmembrane region" description="Helical" evidence="1">
    <location>
        <begin position="346"/>
        <end position="366"/>
    </location>
</feature>
<feature type="transmembrane region" description="Helical" evidence="1">
    <location>
        <begin position="394"/>
        <end position="414"/>
    </location>
</feature>
<feature type="domain" description="PDZ">
    <location>
        <begin position="186"/>
        <end position="271"/>
    </location>
</feature>
<feature type="active site" evidence="2">
    <location>
        <position position="21"/>
    </location>
</feature>
<feature type="binding site" evidence="2">
    <location>
        <position position="20"/>
    </location>
    <ligand>
        <name>Zn(2+)</name>
        <dbReference type="ChEBI" id="CHEBI:29105"/>
        <note>catalytic</note>
    </ligand>
</feature>
<feature type="binding site" evidence="2">
    <location>
        <position position="24"/>
    </location>
    <ligand>
        <name>Zn(2+)</name>
        <dbReference type="ChEBI" id="CHEBI:29105"/>
        <note>catalytic</note>
    </ligand>
</feature>
<feature type="mutagenesis site" description="Loss of signal peptide processing." evidence="4">
    <original>E</original>
    <variation>A</variation>
    <location>
        <position position="21"/>
    </location>
</feature>
<gene>
    <name evidence="5" type="primary">rasP</name>
    <name type="synonym">yluC</name>
    <name type="ordered locus">BSU16560</name>
</gene>